<reference key="1">
    <citation type="journal article" date="2005" name="J. Infect. Dis.">
        <title>Genome sequence of a serotype M28 strain of group A Streptococcus: potential new insights into puerperal sepsis and bacterial disease specificity.</title>
        <authorList>
            <person name="Green N.M."/>
            <person name="Zhang S."/>
            <person name="Porcella S.F."/>
            <person name="Nagiec M.J."/>
            <person name="Barbian K.D."/>
            <person name="Beres S.B."/>
            <person name="Lefebvre R.B."/>
            <person name="Musser J.M."/>
        </authorList>
    </citation>
    <scope>NUCLEOTIDE SEQUENCE [LARGE SCALE GENOMIC DNA]</scope>
    <source>
        <strain>MGAS6180</strain>
    </source>
</reference>
<gene>
    <name evidence="1" type="primary">nanE</name>
    <name type="ordered locus">M28_Spy0206</name>
</gene>
<accession>Q48VD6</accession>
<comment type="function">
    <text evidence="1">Converts N-acetylmannosamine-6-phosphate (ManNAc-6-P) to N-acetylglucosamine-6-phosphate (GlcNAc-6-P).</text>
</comment>
<comment type="catalytic activity">
    <reaction evidence="1">
        <text>an N-acyl-D-glucosamine 6-phosphate = an N-acyl-D-mannosamine 6-phosphate</text>
        <dbReference type="Rhea" id="RHEA:23932"/>
        <dbReference type="ChEBI" id="CHEBI:57599"/>
        <dbReference type="ChEBI" id="CHEBI:57666"/>
        <dbReference type="EC" id="5.1.3.9"/>
    </reaction>
</comment>
<comment type="pathway">
    <text evidence="1">Amino-sugar metabolism; N-acetylneuraminate degradation; D-fructose 6-phosphate from N-acetylneuraminate: step 3/5.</text>
</comment>
<comment type="similarity">
    <text evidence="1">Belongs to the NanE family.</text>
</comment>
<feature type="chain" id="PRO_0000301493" description="Putative N-acetylmannosamine-6-phosphate 2-epimerase">
    <location>
        <begin position="1"/>
        <end position="234"/>
    </location>
</feature>
<organism>
    <name type="scientific">Streptococcus pyogenes serotype M28 (strain MGAS6180)</name>
    <dbReference type="NCBI Taxonomy" id="319701"/>
    <lineage>
        <taxon>Bacteria</taxon>
        <taxon>Bacillati</taxon>
        <taxon>Bacillota</taxon>
        <taxon>Bacilli</taxon>
        <taxon>Lactobacillales</taxon>
        <taxon>Streptococcaceae</taxon>
        <taxon>Streptococcus</taxon>
    </lineage>
</organism>
<keyword id="KW-0119">Carbohydrate metabolism</keyword>
<keyword id="KW-0413">Isomerase</keyword>
<evidence type="ECO:0000255" key="1">
    <source>
        <dbReference type="HAMAP-Rule" id="MF_01235"/>
    </source>
</evidence>
<name>NANE_STRPM</name>
<sequence>MPDKPTKEKLMEQLKGGIIVSCQALPGEPLYSETGGIMPLLAKAAQEAGAVGIRANSVRDIKEIQAITDLPIIGIIKKDYPPQEPFITATMAEVDQLAALNIAVIAMDCTKRDRHDGLDIASFIRQVKEKYPNQLLMADISTFDEGLVAHQAGIDFVGTTLSGYTPYSRQEAGPDVALIEALCKAGIAVIAEGKIHSPEEAKKINDLGVAGIVVGGAITRPKEIAERFIEALKS</sequence>
<dbReference type="EC" id="5.1.3.9" evidence="1"/>
<dbReference type="EMBL" id="CP000056">
    <property type="protein sequence ID" value="AAX71320.1"/>
    <property type="molecule type" value="Genomic_DNA"/>
</dbReference>
<dbReference type="RefSeq" id="WP_002991176.1">
    <property type="nucleotide sequence ID" value="NC_007296.2"/>
</dbReference>
<dbReference type="SMR" id="Q48VD6"/>
<dbReference type="KEGG" id="spb:M28_Spy0206"/>
<dbReference type="HOGENOM" id="CLU_086300_1_0_9"/>
<dbReference type="UniPathway" id="UPA00629">
    <property type="reaction ID" value="UER00682"/>
</dbReference>
<dbReference type="GO" id="GO:0005829">
    <property type="term" value="C:cytosol"/>
    <property type="evidence" value="ECO:0007669"/>
    <property type="project" value="TreeGrafter"/>
</dbReference>
<dbReference type="GO" id="GO:0047465">
    <property type="term" value="F:N-acylglucosamine-6-phosphate 2-epimerase activity"/>
    <property type="evidence" value="ECO:0007669"/>
    <property type="project" value="UniProtKB-EC"/>
</dbReference>
<dbReference type="GO" id="GO:0005975">
    <property type="term" value="P:carbohydrate metabolic process"/>
    <property type="evidence" value="ECO:0007669"/>
    <property type="project" value="UniProtKB-UniRule"/>
</dbReference>
<dbReference type="GO" id="GO:0006053">
    <property type="term" value="P:N-acetylmannosamine catabolic process"/>
    <property type="evidence" value="ECO:0007669"/>
    <property type="project" value="TreeGrafter"/>
</dbReference>
<dbReference type="GO" id="GO:0019262">
    <property type="term" value="P:N-acetylneuraminate catabolic process"/>
    <property type="evidence" value="ECO:0007669"/>
    <property type="project" value="UniProtKB-UniRule"/>
</dbReference>
<dbReference type="CDD" id="cd04729">
    <property type="entry name" value="NanE"/>
    <property type="match status" value="1"/>
</dbReference>
<dbReference type="FunFam" id="3.20.20.70:FF:000035">
    <property type="entry name" value="Putative N-acetylmannosamine-6-phosphate 2-epimerase"/>
    <property type="match status" value="1"/>
</dbReference>
<dbReference type="Gene3D" id="3.20.20.70">
    <property type="entry name" value="Aldolase class I"/>
    <property type="match status" value="1"/>
</dbReference>
<dbReference type="HAMAP" id="MF_01235">
    <property type="entry name" value="ManNAc6P_epimer"/>
    <property type="match status" value="1"/>
</dbReference>
<dbReference type="InterPro" id="IPR013785">
    <property type="entry name" value="Aldolase_TIM"/>
</dbReference>
<dbReference type="InterPro" id="IPR007260">
    <property type="entry name" value="NanE"/>
</dbReference>
<dbReference type="InterPro" id="IPR011060">
    <property type="entry name" value="RibuloseP-bd_barrel"/>
</dbReference>
<dbReference type="NCBIfam" id="NF002231">
    <property type="entry name" value="PRK01130.1"/>
    <property type="match status" value="1"/>
</dbReference>
<dbReference type="PANTHER" id="PTHR36204">
    <property type="entry name" value="N-ACETYLMANNOSAMINE-6-PHOSPHATE 2-EPIMERASE-RELATED"/>
    <property type="match status" value="1"/>
</dbReference>
<dbReference type="PANTHER" id="PTHR36204:SF1">
    <property type="entry name" value="N-ACETYLMANNOSAMINE-6-PHOSPHATE 2-EPIMERASE-RELATED"/>
    <property type="match status" value="1"/>
</dbReference>
<dbReference type="Pfam" id="PF04131">
    <property type="entry name" value="NanE"/>
    <property type="match status" value="1"/>
</dbReference>
<dbReference type="SUPFAM" id="SSF51366">
    <property type="entry name" value="Ribulose-phoshate binding barrel"/>
    <property type="match status" value="1"/>
</dbReference>
<proteinExistence type="inferred from homology"/>
<protein>
    <recommendedName>
        <fullName evidence="1">Putative N-acetylmannosamine-6-phosphate 2-epimerase</fullName>
        <ecNumber evidence="1">5.1.3.9</ecNumber>
    </recommendedName>
    <alternativeName>
        <fullName evidence="1">ManNAc-6-P epimerase</fullName>
    </alternativeName>
</protein>